<dbReference type="EMBL" id="CP000926">
    <property type="protein sequence ID" value="ABY99505.1"/>
    <property type="molecule type" value="Genomic_DNA"/>
</dbReference>
<dbReference type="RefSeq" id="WP_003251220.1">
    <property type="nucleotide sequence ID" value="NC_010322.1"/>
</dbReference>
<dbReference type="SMR" id="B0KLX7"/>
<dbReference type="GeneID" id="83679288"/>
<dbReference type="KEGG" id="ppg:PputGB1_3614"/>
<dbReference type="eggNOG" id="COG2127">
    <property type="taxonomic scope" value="Bacteria"/>
</dbReference>
<dbReference type="HOGENOM" id="CLU_134358_2_0_6"/>
<dbReference type="Proteomes" id="UP000002157">
    <property type="component" value="Chromosome"/>
</dbReference>
<dbReference type="GO" id="GO:0030163">
    <property type="term" value="P:protein catabolic process"/>
    <property type="evidence" value="ECO:0007669"/>
    <property type="project" value="InterPro"/>
</dbReference>
<dbReference type="GO" id="GO:0006508">
    <property type="term" value="P:proteolysis"/>
    <property type="evidence" value="ECO:0007669"/>
    <property type="project" value="UniProtKB-UniRule"/>
</dbReference>
<dbReference type="FunFam" id="3.30.1390.10:FF:000002">
    <property type="entry name" value="ATP-dependent Clp protease adapter protein ClpS"/>
    <property type="match status" value="1"/>
</dbReference>
<dbReference type="Gene3D" id="3.30.1390.10">
    <property type="match status" value="1"/>
</dbReference>
<dbReference type="HAMAP" id="MF_00302">
    <property type="entry name" value="ClpS"/>
    <property type="match status" value="1"/>
</dbReference>
<dbReference type="InterPro" id="IPR022935">
    <property type="entry name" value="ClpS"/>
</dbReference>
<dbReference type="InterPro" id="IPR003769">
    <property type="entry name" value="ClpS_core"/>
</dbReference>
<dbReference type="InterPro" id="IPR014719">
    <property type="entry name" value="Ribosomal_bL12_C/ClpS-like"/>
</dbReference>
<dbReference type="NCBIfam" id="NF000669">
    <property type="entry name" value="PRK00033.1-2"/>
    <property type="match status" value="1"/>
</dbReference>
<dbReference type="NCBIfam" id="NF000672">
    <property type="entry name" value="PRK00033.1-5"/>
    <property type="match status" value="1"/>
</dbReference>
<dbReference type="PANTHER" id="PTHR33473:SF19">
    <property type="entry name" value="ATP-DEPENDENT CLP PROTEASE ADAPTER PROTEIN CLPS"/>
    <property type="match status" value="1"/>
</dbReference>
<dbReference type="PANTHER" id="PTHR33473">
    <property type="entry name" value="ATP-DEPENDENT CLP PROTEASE ADAPTER PROTEIN CLPS1, CHLOROPLASTIC"/>
    <property type="match status" value="1"/>
</dbReference>
<dbReference type="Pfam" id="PF02617">
    <property type="entry name" value="ClpS"/>
    <property type="match status" value="1"/>
</dbReference>
<dbReference type="SUPFAM" id="SSF54736">
    <property type="entry name" value="ClpS-like"/>
    <property type="match status" value="1"/>
</dbReference>
<feature type="chain" id="PRO_1000079024" description="ATP-dependent Clp protease adapter protein ClpS">
    <location>
        <begin position="1"/>
        <end position="120"/>
    </location>
</feature>
<feature type="region of interest" description="Disordered" evidence="2">
    <location>
        <begin position="1"/>
        <end position="27"/>
    </location>
</feature>
<name>CLPS_PSEPG</name>
<gene>
    <name evidence="1" type="primary">clpS</name>
    <name type="ordered locus">PputGB1_3614</name>
</gene>
<accession>B0KLX7</accession>
<comment type="function">
    <text evidence="1">Involved in the modulation of the specificity of the ClpAP-mediated ATP-dependent protein degradation.</text>
</comment>
<comment type="subunit">
    <text evidence="1">Binds to the N-terminal domain of the chaperone ClpA.</text>
</comment>
<comment type="similarity">
    <text evidence="1">Belongs to the ClpS family.</text>
</comment>
<reference key="1">
    <citation type="submission" date="2008-01" db="EMBL/GenBank/DDBJ databases">
        <title>Complete sequence of Pseudomonas putida GB-1.</title>
        <authorList>
            <consortium name="US DOE Joint Genome Institute"/>
            <person name="Copeland A."/>
            <person name="Lucas S."/>
            <person name="Lapidus A."/>
            <person name="Barry K."/>
            <person name="Glavina del Rio T."/>
            <person name="Dalin E."/>
            <person name="Tice H."/>
            <person name="Pitluck S."/>
            <person name="Bruce D."/>
            <person name="Goodwin L."/>
            <person name="Chertkov O."/>
            <person name="Brettin T."/>
            <person name="Detter J.C."/>
            <person name="Han C."/>
            <person name="Kuske C.R."/>
            <person name="Schmutz J."/>
            <person name="Larimer F."/>
            <person name="Land M."/>
            <person name="Hauser L."/>
            <person name="Kyrpides N."/>
            <person name="Kim E."/>
            <person name="McCarthy J.K."/>
            <person name="Richardson P."/>
        </authorList>
    </citation>
    <scope>NUCLEOTIDE SEQUENCE [LARGE SCALE GENOMIC DNA]</scope>
    <source>
        <strain>GB-1</strain>
    </source>
</reference>
<organism>
    <name type="scientific">Pseudomonas putida (strain GB-1)</name>
    <dbReference type="NCBI Taxonomy" id="76869"/>
    <lineage>
        <taxon>Bacteria</taxon>
        <taxon>Pseudomonadati</taxon>
        <taxon>Pseudomonadota</taxon>
        <taxon>Gammaproteobacteria</taxon>
        <taxon>Pseudomonadales</taxon>
        <taxon>Pseudomonadaceae</taxon>
        <taxon>Pseudomonas</taxon>
    </lineage>
</organism>
<sequence length="120" mass="13602">MHAPSEIRLTFNQDRPQSNEDDGSGLAVQEAKPILQAPPMYKVVLFNDDYTPMDFVVEVLETFFSLNRELATKIMLTVHTEGRAVCGLFTRDIAETKAMQVNQYARESQHPLLCEIEKDG</sequence>
<evidence type="ECO:0000255" key="1">
    <source>
        <dbReference type="HAMAP-Rule" id="MF_00302"/>
    </source>
</evidence>
<evidence type="ECO:0000256" key="2">
    <source>
        <dbReference type="SAM" id="MobiDB-lite"/>
    </source>
</evidence>
<proteinExistence type="inferred from homology"/>
<protein>
    <recommendedName>
        <fullName evidence="1">ATP-dependent Clp protease adapter protein ClpS</fullName>
    </recommendedName>
</protein>